<comment type="function">
    <text evidence="1">Displays ATPase and GTPase activities.</text>
</comment>
<comment type="similarity">
    <text evidence="1">Belongs to the RapZ-like family.</text>
</comment>
<proteinExistence type="inferred from homology"/>
<name>Y1424_STRR6</name>
<reference key="1">
    <citation type="journal article" date="2001" name="J. Bacteriol.">
        <title>Genome of the bacterium Streptococcus pneumoniae strain R6.</title>
        <authorList>
            <person name="Hoskins J."/>
            <person name="Alborn W.E. Jr."/>
            <person name="Arnold J."/>
            <person name="Blaszczak L.C."/>
            <person name="Burgett S."/>
            <person name="DeHoff B.S."/>
            <person name="Estrem S.T."/>
            <person name="Fritz L."/>
            <person name="Fu D.-J."/>
            <person name="Fuller W."/>
            <person name="Geringer C."/>
            <person name="Gilmour R."/>
            <person name="Glass J.S."/>
            <person name="Khoja H."/>
            <person name="Kraft A.R."/>
            <person name="Lagace R.E."/>
            <person name="LeBlanc D.J."/>
            <person name="Lee L.N."/>
            <person name="Lefkowitz E.J."/>
            <person name="Lu J."/>
            <person name="Matsushima P."/>
            <person name="McAhren S.M."/>
            <person name="McHenney M."/>
            <person name="McLeaster K."/>
            <person name="Mundy C.W."/>
            <person name="Nicas T.I."/>
            <person name="Norris F.H."/>
            <person name="O'Gara M."/>
            <person name="Peery R.B."/>
            <person name="Robertson G.T."/>
            <person name="Rockey P."/>
            <person name="Sun P.-M."/>
            <person name="Winkler M.E."/>
            <person name="Yang Y."/>
            <person name="Young-Bellido M."/>
            <person name="Zhao G."/>
            <person name="Zook C.A."/>
            <person name="Baltz R.H."/>
            <person name="Jaskunas S.R."/>
            <person name="Rosteck P.R. Jr."/>
            <person name="Skatrud P.L."/>
            <person name="Glass J.I."/>
        </authorList>
    </citation>
    <scope>NUCLEOTIDE SEQUENCE [LARGE SCALE GENOMIC DNA]</scope>
    <source>
        <strain>ATCC BAA-255 / R6</strain>
    </source>
</reference>
<dbReference type="EMBL" id="AE007317">
    <property type="protein sequence ID" value="AAL00228.1"/>
    <property type="molecule type" value="Genomic_DNA"/>
</dbReference>
<dbReference type="PIR" id="G98049">
    <property type="entry name" value="G98049"/>
</dbReference>
<dbReference type="RefSeq" id="NP_359017.1">
    <property type="nucleotide sequence ID" value="NC_003098.1"/>
</dbReference>
<dbReference type="RefSeq" id="WP_000163025.1">
    <property type="nucleotide sequence ID" value="NC_003098.1"/>
</dbReference>
<dbReference type="SMR" id="Q8DP10"/>
<dbReference type="STRING" id="171101.spr1424"/>
<dbReference type="KEGG" id="spr:spr1424"/>
<dbReference type="PATRIC" id="fig|171101.6.peg.1539"/>
<dbReference type="eggNOG" id="COG1660">
    <property type="taxonomic scope" value="Bacteria"/>
</dbReference>
<dbReference type="HOGENOM" id="CLU_059558_0_0_9"/>
<dbReference type="Proteomes" id="UP000000586">
    <property type="component" value="Chromosome"/>
</dbReference>
<dbReference type="GO" id="GO:0005524">
    <property type="term" value="F:ATP binding"/>
    <property type="evidence" value="ECO:0007669"/>
    <property type="project" value="UniProtKB-UniRule"/>
</dbReference>
<dbReference type="GO" id="GO:0005525">
    <property type="term" value="F:GTP binding"/>
    <property type="evidence" value="ECO:0007669"/>
    <property type="project" value="UniProtKB-UniRule"/>
</dbReference>
<dbReference type="GO" id="GO:0060090">
    <property type="term" value="F:molecular adaptor activity"/>
    <property type="evidence" value="ECO:0000318"/>
    <property type="project" value="GO_Central"/>
</dbReference>
<dbReference type="Gene3D" id="3.40.50.300">
    <property type="entry name" value="P-loop containing nucleotide triphosphate hydrolases"/>
    <property type="match status" value="1"/>
</dbReference>
<dbReference type="HAMAP" id="MF_00636">
    <property type="entry name" value="RapZ_like"/>
    <property type="match status" value="1"/>
</dbReference>
<dbReference type="InterPro" id="IPR027417">
    <property type="entry name" value="P-loop_NTPase"/>
</dbReference>
<dbReference type="InterPro" id="IPR005337">
    <property type="entry name" value="RapZ-like"/>
</dbReference>
<dbReference type="InterPro" id="IPR053930">
    <property type="entry name" value="RapZ-like_N"/>
</dbReference>
<dbReference type="InterPro" id="IPR053931">
    <property type="entry name" value="RapZ_C"/>
</dbReference>
<dbReference type="NCBIfam" id="NF003828">
    <property type="entry name" value="PRK05416.1"/>
    <property type="match status" value="1"/>
</dbReference>
<dbReference type="PANTHER" id="PTHR30448">
    <property type="entry name" value="RNASE ADAPTER PROTEIN RAPZ"/>
    <property type="match status" value="1"/>
</dbReference>
<dbReference type="PANTHER" id="PTHR30448:SF0">
    <property type="entry name" value="RNASE ADAPTER PROTEIN RAPZ"/>
    <property type="match status" value="1"/>
</dbReference>
<dbReference type="Pfam" id="PF22740">
    <property type="entry name" value="PapZ_C"/>
    <property type="match status" value="1"/>
</dbReference>
<dbReference type="Pfam" id="PF03668">
    <property type="entry name" value="RapZ-like_N"/>
    <property type="match status" value="1"/>
</dbReference>
<dbReference type="PIRSF" id="PIRSF005052">
    <property type="entry name" value="P-loopkin"/>
    <property type="match status" value="1"/>
</dbReference>
<dbReference type="SUPFAM" id="SSF52540">
    <property type="entry name" value="P-loop containing nucleoside triphosphate hydrolases"/>
    <property type="match status" value="1"/>
</dbReference>
<keyword id="KW-0067">ATP-binding</keyword>
<keyword id="KW-0342">GTP-binding</keyword>
<keyword id="KW-0547">Nucleotide-binding</keyword>
<keyword id="KW-1185">Reference proteome</keyword>
<sequence length="296" mass="33765">MTKKQLHLVIVTGMGGAGKTVAIQSFEDLGYFTIDNMPPALLPKFLQLVEIKEDNPKLALVVDMRSRSFFSEIQAVLDELENQDGLDFKILFLDAADKELVARYKETRRSHPLAADGRILDGIKLERELLAPLKNMSQNVVDTTELTPRELRKTLAEQFSDQEQAQSFRIEVMSFGFKYGIPIDADLVFDVRFLPNPYYLPELRNQTGVDEPVYDYVMNHPESEDFYQHLLALIEPILPSYQKEGKSVLTIAMGCTGGQHRSVAFAKRLVQDLSKNWSVNEGHRDKDRRKETVNRS</sequence>
<gene>
    <name type="ordered locus">spr1424</name>
</gene>
<evidence type="ECO:0000255" key="1">
    <source>
        <dbReference type="HAMAP-Rule" id="MF_00636"/>
    </source>
</evidence>
<feature type="chain" id="PRO_0000107771" description="Nucleotide-binding protein spr1424">
    <location>
        <begin position="1"/>
        <end position="296"/>
    </location>
</feature>
<feature type="binding site" evidence="1">
    <location>
        <begin position="13"/>
        <end position="20"/>
    </location>
    <ligand>
        <name>ATP</name>
        <dbReference type="ChEBI" id="CHEBI:30616"/>
    </ligand>
</feature>
<feature type="binding site" evidence="1">
    <location>
        <begin position="63"/>
        <end position="66"/>
    </location>
    <ligand>
        <name>GTP</name>
        <dbReference type="ChEBI" id="CHEBI:37565"/>
    </ligand>
</feature>
<organism>
    <name type="scientific">Streptococcus pneumoniae (strain ATCC BAA-255 / R6)</name>
    <dbReference type="NCBI Taxonomy" id="171101"/>
    <lineage>
        <taxon>Bacteria</taxon>
        <taxon>Bacillati</taxon>
        <taxon>Bacillota</taxon>
        <taxon>Bacilli</taxon>
        <taxon>Lactobacillales</taxon>
        <taxon>Streptococcaceae</taxon>
        <taxon>Streptococcus</taxon>
    </lineage>
</organism>
<accession>Q8DP10</accession>
<protein>
    <recommendedName>
        <fullName evidence="1">Nucleotide-binding protein spr1424</fullName>
    </recommendedName>
</protein>